<evidence type="ECO:0000255" key="1">
    <source>
        <dbReference type="HAMAP-Rule" id="MF_00083"/>
    </source>
</evidence>
<comment type="function">
    <text evidence="1">Hydrolyzes ribosome-free peptidyl-tRNAs (with 1 or more amino acids incorporated), which drop off the ribosome during protein synthesis, or as a result of ribosome stalling.</text>
</comment>
<comment type="function">
    <text evidence="1">Catalyzes the release of premature peptidyl moieties from peptidyl-tRNA molecules trapped in stalled 50S ribosomal subunits, and thus maintains levels of free tRNAs and 50S ribosomes.</text>
</comment>
<comment type="catalytic activity">
    <reaction evidence="1">
        <text>an N-acyl-L-alpha-aminoacyl-tRNA + H2O = an N-acyl-L-amino acid + a tRNA + H(+)</text>
        <dbReference type="Rhea" id="RHEA:54448"/>
        <dbReference type="Rhea" id="RHEA-COMP:10123"/>
        <dbReference type="Rhea" id="RHEA-COMP:13883"/>
        <dbReference type="ChEBI" id="CHEBI:15377"/>
        <dbReference type="ChEBI" id="CHEBI:15378"/>
        <dbReference type="ChEBI" id="CHEBI:59874"/>
        <dbReference type="ChEBI" id="CHEBI:78442"/>
        <dbReference type="ChEBI" id="CHEBI:138191"/>
        <dbReference type="EC" id="3.1.1.29"/>
    </reaction>
</comment>
<comment type="subunit">
    <text evidence="1">Monomer.</text>
</comment>
<comment type="subcellular location">
    <subcellularLocation>
        <location evidence="1">Cytoplasm</location>
    </subcellularLocation>
</comment>
<comment type="similarity">
    <text evidence="1">Belongs to the PTH family.</text>
</comment>
<reference key="1">
    <citation type="submission" date="2007-06" db="EMBL/GenBank/DDBJ databases">
        <authorList>
            <person name="Brinkac L.M."/>
            <person name="Daugherty S."/>
            <person name="Dodson R.J."/>
            <person name="Madupu R."/>
            <person name="Brown J.L."/>
            <person name="Bruce D."/>
            <person name="Detter C."/>
            <person name="Munk C."/>
            <person name="Smith L.A."/>
            <person name="Smith T.J."/>
            <person name="White O."/>
            <person name="Brettin T.S."/>
        </authorList>
    </citation>
    <scope>NUCLEOTIDE SEQUENCE [LARGE SCALE GENOMIC DNA]</scope>
    <source>
        <strain>Langeland / NCTC 10281 / Type F</strain>
    </source>
</reference>
<dbReference type="EC" id="3.1.1.29" evidence="1"/>
<dbReference type="EMBL" id="CP000728">
    <property type="protein sequence ID" value="ABS41798.1"/>
    <property type="molecule type" value="Genomic_DNA"/>
</dbReference>
<dbReference type="RefSeq" id="WP_012101161.1">
    <property type="nucleotide sequence ID" value="NC_009699.1"/>
</dbReference>
<dbReference type="SMR" id="A7GJD4"/>
<dbReference type="KEGG" id="cbf:CLI_3760"/>
<dbReference type="HOGENOM" id="CLU_062456_4_1_9"/>
<dbReference type="Proteomes" id="UP000002410">
    <property type="component" value="Chromosome"/>
</dbReference>
<dbReference type="GO" id="GO:0005737">
    <property type="term" value="C:cytoplasm"/>
    <property type="evidence" value="ECO:0007669"/>
    <property type="project" value="UniProtKB-SubCell"/>
</dbReference>
<dbReference type="GO" id="GO:0004045">
    <property type="term" value="F:peptidyl-tRNA hydrolase activity"/>
    <property type="evidence" value="ECO:0007669"/>
    <property type="project" value="UniProtKB-UniRule"/>
</dbReference>
<dbReference type="GO" id="GO:0000049">
    <property type="term" value="F:tRNA binding"/>
    <property type="evidence" value="ECO:0007669"/>
    <property type="project" value="UniProtKB-UniRule"/>
</dbReference>
<dbReference type="GO" id="GO:0006515">
    <property type="term" value="P:protein quality control for misfolded or incompletely synthesized proteins"/>
    <property type="evidence" value="ECO:0007669"/>
    <property type="project" value="UniProtKB-UniRule"/>
</dbReference>
<dbReference type="GO" id="GO:0072344">
    <property type="term" value="P:rescue of stalled ribosome"/>
    <property type="evidence" value="ECO:0007669"/>
    <property type="project" value="UniProtKB-UniRule"/>
</dbReference>
<dbReference type="CDD" id="cd00462">
    <property type="entry name" value="PTH"/>
    <property type="match status" value="1"/>
</dbReference>
<dbReference type="FunFam" id="3.40.50.1470:FF:000001">
    <property type="entry name" value="Peptidyl-tRNA hydrolase"/>
    <property type="match status" value="1"/>
</dbReference>
<dbReference type="Gene3D" id="3.40.50.1470">
    <property type="entry name" value="Peptidyl-tRNA hydrolase"/>
    <property type="match status" value="1"/>
</dbReference>
<dbReference type="HAMAP" id="MF_00083">
    <property type="entry name" value="Pept_tRNA_hydro_bact"/>
    <property type="match status" value="1"/>
</dbReference>
<dbReference type="InterPro" id="IPR001328">
    <property type="entry name" value="Pept_tRNA_hydro"/>
</dbReference>
<dbReference type="InterPro" id="IPR018171">
    <property type="entry name" value="Pept_tRNA_hydro_CS"/>
</dbReference>
<dbReference type="InterPro" id="IPR036416">
    <property type="entry name" value="Pept_tRNA_hydro_sf"/>
</dbReference>
<dbReference type="NCBIfam" id="TIGR00447">
    <property type="entry name" value="pth"/>
    <property type="match status" value="1"/>
</dbReference>
<dbReference type="PANTHER" id="PTHR17224">
    <property type="entry name" value="PEPTIDYL-TRNA HYDROLASE"/>
    <property type="match status" value="1"/>
</dbReference>
<dbReference type="PANTHER" id="PTHR17224:SF1">
    <property type="entry name" value="PEPTIDYL-TRNA HYDROLASE"/>
    <property type="match status" value="1"/>
</dbReference>
<dbReference type="Pfam" id="PF01195">
    <property type="entry name" value="Pept_tRNA_hydro"/>
    <property type="match status" value="1"/>
</dbReference>
<dbReference type="SUPFAM" id="SSF53178">
    <property type="entry name" value="Peptidyl-tRNA hydrolase-like"/>
    <property type="match status" value="1"/>
</dbReference>
<dbReference type="PROSITE" id="PS01195">
    <property type="entry name" value="PEPT_TRNA_HYDROL_1"/>
    <property type="match status" value="1"/>
</dbReference>
<dbReference type="PROSITE" id="PS01196">
    <property type="entry name" value="PEPT_TRNA_HYDROL_2"/>
    <property type="match status" value="1"/>
</dbReference>
<keyword id="KW-0963">Cytoplasm</keyword>
<keyword id="KW-0378">Hydrolase</keyword>
<keyword id="KW-0694">RNA-binding</keyword>
<keyword id="KW-0820">tRNA-binding</keyword>
<sequence>MYLVVGLGNIGKEYKKTRHNIGFDVVDIIAEKYNIEINRQKFKGSYGEGRIGNEKIILLKPSTYMNLSGESVIEAANFYKIDKENIIVIYDDMSIDIGKLRVRGKGSAGGHNGIKNIIQHLNSDIFPRVRVGIGQPDENVVNYVLGKFSKDQREIIEKVLAMSAKACISIVEDGVTEAMNKYNGVKIEV</sequence>
<gene>
    <name evidence="1" type="primary">pth</name>
    <name type="ordered locus">CLI_3760</name>
</gene>
<proteinExistence type="inferred from homology"/>
<accession>A7GJD4</accession>
<organism>
    <name type="scientific">Clostridium botulinum (strain Langeland / NCTC 10281 / Type F)</name>
    <dbReference type="NCBI Taxonomy" id="441772"/>
    <lineage>
        <taxon>Bacteria</taxon>
        <taxon>Bacillati</taxon>
        <taxon>Bacillota</taxon>
        <taxon>Clostridia</taxon>
        <taxon>Eubacteriales</taxon>
        <taxon>Clostridiaceae</taxon>
        <taxon>Clostridium</taxon>
    </lineage>
</organism>
<protein>
    <recommendedName>
        <fullName evidence="1">Peptidyl-tRNA hydrolase</fullName>
        <shortName evidence="1">Pth</shortName>
        <ecNumber evidence="1">3.1.1.29</ecNumber>
    </recommendedName>
</protein>
<name>PTH_CLOBL</name>
<feature type="chain" id="PRO_1000010585" description="Peptidyl-tRNA hydrolase">
    <location>
        <begin position="1"/>
        <end position="189"/>
    </location>
</feature>
<feature type="active site" description="Proton acceptor" evidence="1">
    <location>
        <position position="19"/>
    </location>
</feature>
<feature type="binding site" evidence="1">
    <location>
        <position position="14"/>
    </location>
    <ligand>
        <name>tRNA</name>
        <dbReference type="ChEBI" id="CHEBI:17843"/>
    </ligand>
</feature>
<feature type="binding site" evidence="1">
    <location>
        <position position="64"/>
    </location>
    <ligand>
        <name>tRNA</name>
        <dbReference type="ChEBI" id="CHEBI:17843"/>
    </ligand>
</feature>
<feature type="binding site" evidence="1">
    <location>
        <position position="66"/>
    </location>
    <ligand>
        <name>tRNA</name>
        <dbReference type="ChEBI" id="CHEBI:17843"/>
    </ligand>
</feature>
<feature type="binding site" evidence="1">
    <location>
        <position position="112"/>
    </location>
    <ligand>
        <name>tRNA</name>
        <dbReference type="ChEBI" id="CHEBI:17843"/>
    </ligand>
</feature>
<feature type="site" description="Discriminates between blocked and unblocked aminoacyl-tRNA" evidence="1">
    <location>
        <position position="9"/>
    </location>
</feature>
<feature type="site" description="Stabilizes the basic form of H active site to accept a proton" evidence="1">
    <location>
        <position position="91"/>
    </location>
</feature>